<comment type="function">
    <text evidence="1">Part of the ABC transporter FtsEX involved in cellular division.</text>
</comment>
<comment type="subunit">
    <text evidence="1">Forms a membrane-associated complex with FtsE.</text>
</comment>
<comment type="subcellular location">
    <subcellularLocation>
        <location>Cell inner membrane</location>
        <topology evidence="1 2">Multi-pass membrane protein</topology>
    </subcellularLocation>
</comment>
<comment type="similarity">
    <text evidence="2">Belongs to the ABC-4 integral membrane protein family. FtsX subfamily.</text>
</comment>
<keyword id="KW-0131">Cell cycle</keyword>
<keyword id="KW-0132">Cell division</keyword>
<keyword id="KW-0997">Cell inner membrane</keyword>
<keyword id="KW-1003">Cell membrane</keyword>
<keyword id="KW-0472">Membrane</keyword>
<keyword id="KW-0812">Transmembrane</keyword>
<keyword id="KW-1133">Transmembrane helix</keyword>
<dbReference type="EMBL" id="AB025418">
    <property type="protein sequence ID" value="BAA83807.1"/>
    <property type="molecule type" value="Genomic_DNA"/>
</dbReference>
<dbReference type="PIR" id="JC7149">
    <property type="entry name" value="JC7149"/>
</dbReference>
<dbReference type="RefSeq" id="WP_016712522.1">
    <property type="nucleotide sequence ID" value="NZ_AP022324.1"/>
</dbReference>
<dbReference type="SMR" id="Q9R9Y4"/>
<dbReference type="GeneID" id="49871224"/>
<dbReference type="eggNOG" id="COG2177">
    <property type="taxonomic scope" value="Bacteria"/>
</dbReference>
<dbReference type="OrthoDB" id="9813411at2"/>
<dbReference type="GO" id="GO:0032153">
    <property type="term" value="C:cell division site"/>
    <property type="evidence" value="ECO:0007669"/>
    <property type="project" value="TreeGrafter"/>
</dbReference>
<dbReference type="GO" id="GO:0009276">
    <property type="term" value="C:Gram-negative-bacterium-type cell wall"/>
    <property type="evidence" value="ECO:0000250"/>
    <property type="project" value="UniProtKB"/>
</dbReference>
<dbReference type="GO" id="GO:0005886">
    <property type="term" value="C:plasma membrane"/>
    <property type="evidence" value="ECO:0007669"/>
    <property type="project" value="UniProtKB-SubCell"/>
</dbReference>
<dbReference type="GO" id="GO:0051301">
    <property type="term" value="P:cell division"/>
    <property type="evidence" value="ECO:0000250"/>
    <property type="project" value="UniProtKB"/>
</dbReference>
<dbReference type="FunFam" id="3.30.70.3040:FF:000002">
    <property type="entry name" value="Cell division protein FtsX"/>
    <property type="match status" value="1"/>
</dbReference>
<dbReference type="Gene3D" id="3.30.70.3040">
    <property type="match status" value="1"/>
</dbReference>
<dbReference type="InterPro" id="IPR003838">
    <property type="entry name" value="ABC3_permease_C"/>
</dbReference>
<dbReference type="InterPro" id="IPR004513">
    <property type="entry name" value="FtsX"/>
</dbReference>
<dbReference type="InterPro" id="IPR040690">
    <property type="entry name" value="FtsX_ECD"/>
</dbReference>
<dbReference type="InterPro" id="IPR047590">
    <property type="entry name" value="FtsX_proteobact"/>
</dbReference>
<dbReference type="NCBIfam" id="TIGR00439">
    <property type="entry name" value="FtsX_Gneg"/>
    <property type="match status" value="1"/>
</dbReference>
<dbReference type="PANTHER" id="PTHR47755">
    <property type="entry name" value="CELL DIVISION PROTEIN FTSX"/>
    <property type="match status" value="1"/>
</dbReference>
<dbReference type="PANTHER" id="PTHR47755:SF1">
    <property type="entry name" value="CELL DIVISION PROTEIN FTSX"/>
    <property type="match status" value="1"/>
</dbReference>
<dbReference type="Pfam" id="PF02687">
    <property type="entry name" value="FtsX"/>
    <property type="match status" value="1"/>
</dbReference>
<dbReference type="Pfam" id="PF18075">
    <property type="entry name" value="FtsX_ECD"/>
    <property type="match status" value="1"/>
</dbReference>
<dbReference type="PIRSF" id="PIRSF003097">
    <property type="entry name" value="FtsX"/>
    <property type="match status" value="1"/>
</dbReference>
<sequence length="341" mass="37001">MSTTRTPKVSERVAPKPADPQPAKKKRGEDDDGPDFRTLLHAWLESHRASMADSLRRLGKQPIGSFFTCLVMAVALSMPMGLSLLLKNIEQLGGSWQRAAQISLFLKLDAGSRDGEALRDEIKGMPGVADAQYVSREQALEEFQQQSGLGEALRELPDNPLPGVVVVTPTEVDKPALEALRQRLSELPRVEVAQLDLVWVERLAAILKLGDRFVFGLAVMLISALLLVIGNTIRLHIENRRIEIEVIKLVGGTDAYVRRPFLYMGALYGLGAGLLAWGILAFGLNWLNEAVVGLSGLYGSDFALGGVPASDGLSLLIGAVLLGYIGAWIAVARHLNELAPR</sequence>
<gene>
    <name evidence="4" type="primary">ftsX</name>
</gene>
<protein>
    <recommendedName>
        <fullName evidence="1 4">Cell division protein FtsX</fullName>
    </recommendedName>
</protein>
<feature type="chain" id="PRO_0000421663" description="Cell division protein FtsX">
    <location>
        <begin position="1"/>
        <end position="341"/>
    </location>
</feature>
<feature type="topological domain" description="Cytoplasmic" evidence="2">
    <location>
        <begin position="1"/>
        <end position="65"/>
    </location>
</feature>
<feature type="transmembrane region" description="Helical" evidence="2">
    <location>
        <begin position="66"/>
        <end position="86"/>
    </location>
</feature>
<feature type="topological domain" description="Periplasmic" evidence="2">
    <location>
        <begin position="87"/>
        <end position="212"/>
    </location>
</feature>
<feature type="transmembrane region" description="Helical" evidence="2">
    <location>
        <begin position="213"/>
        <end position="233"/>
    </location>
</feature>
<feature type="topological domain" description="Cytoplasmic" evidence="2">
    <location>
        <begin position="234"/>
        <end position="263"/>
    </location>
</feature>
<feature type="transmembrane region" description="Helical" evidence="2">
    <location>
        <begin position="264"/>
        <end position="284"/>
    </location>
</feature>
<feature type="topological domain" description="Periplasmic" evidence="2">
    <location>
        <begin position="285"/>
        <end position="311"/>
    </location>
</feature>
<feature type="transmembrane region" description="Helical" evidence="2">
    <location>
        <begin position="312"/>
        <end position="332"/>
    </location>
</feature>
<feature type="topological domain" description="Cytoplasmic" evidence="2">
    <location>
        <begin position="333"/>
        <end position="341"/>
    </location>
</feature>
<feature type="region of interest" description="Disordered" evidence="3">
    <location>
        <begin position="1"/>
        <end position="34"/>
    </location>
</feature>
<evidence type="ECO:0000250" key="1">
    <source>
        <dbReference type="UniProtKB" id="P0AC30"/>
    </source>
</evidence>
<evidence type="ECO:0000255" key="2"/>
<evidence type="ECO:0000256" key="3">
    <source>
        <dbReference type="SAM" id="MobiDB-lite"/>
    </source>
</evidence>
<evidence type="ECO:0000312" key="4">
    <source>
        <dbReference type="EMBL" id="BAA83807.1"/>
    </source>
</evidence>
<organism>
    <name type="scientific">Pseudomonas putida</name>
    <name type="common">Arthrobacter siderocapsulatus</name>
    <dbReference type="NCBI Taxonomy" id="303"/>
    <lineage>
        <taxon>Bacteria</taxon>
        <taxon>Pseudomonadati</taxon>
        <taxon>Pseudomonadota</taxon>
        <taxon>Gammaproteobacteria</taxon>
        <taxon>Pseudomonadales</taxon>
        <taxon>Pseudomonadaceae</taxon>
        <taxon>Pseudomonas</taxon>
    </lineage>
</organism>
<proteinExistence type="inferred from homology"/>
<accession>Q9R9Y4</accession>
<reference evidence="4" key="1">
    <citation type="journal article" date="1999" name="DNA Res.">
        <title>Cloning and sequencing of rpoH and identification of ftsE-ftsX in Pseudomonas putida PpG1.</title>
        <authorList>
            <person name="Aramaki H."/>
            <person name="Sagara Y."/>
            <person name="Fujita M."/>
        </authorList>
    </citation>
    <scope>NUCLEOTIDE SEQUENCE [GENOMIC DNA]</scope>
    <scope>IDENTIFICATION</scope>
    <source>
        <strain evidence="4">ATCC 17453 / DSM 50198 / JCM 6157 / NCIMB 10007 / NRRL B-4067 / Stanier 77 / Biotype A</strain>
    </source>
</reference>
<name>FTSX_PSEPU</name>